<sequence>ALTVETKKRPIGSKPXALRRVGFILNXAPY</sequence>
<evidence type="ECO:0000250" key="1"/>
<evidence type="ECO:0000305" key="2"/>
<reference key="1">
    <citation type="journal article" date="1998" name="Plant Cell Physiol.">
        <title>Ribosomal proteins in the cyanobacterium Anabaena variabilis strain M3: presence of L25 protein.</title>
        <authorList>
            <person name="Sato N."/>
            <person name="Wada A."/>
            <person name="Tanaka A."/>
        </authorList>
    </citation>
    <scope>PROTEIN SEQUENCE</scope>
    <source>
        <strain>M3</strain>
    </source>
</reference>
<keyword id="KW-0903">Direct protein sequencing</keyword>
<keyword id="KW-0687">Ribonucleoprotein</keyword>
<keyword id="KW-0689">Ribosomal protein</keyword>
<keyword id="KW-0694">RNA-binding</keyword>
<keyword id="KW-0699">rRNA-binding</keyword>
<feature type="chain" id="PRO_0000181472" description="Large ribosomal subunit protein bL25">
    <location>
        <begin position="1"/>
        <end position="30" status="greater than"/>
    </location>
</feature>
<feature type="non-terminal residue">
    <location>
        <position position="30"/>
    </location>
</feature>
<gene>
    <name type="primary">rplY</name>
</gene>
<proteinExistence type="evidence at protein level"/>
<protein>
    <recommendedName>
        <fullName evidence="2">Large ribosomal subunit protein bL25</fullName>
    </recommendedName>
    <alternativeName>
        <fullName>50S ribosomal protein L25</fullName>
    </alternativeName>
</protein>
<name>RL25_ANAVA</name>
<accession>P0C065</accession>
<dbReference type="GO" id="GO:1990904">
    <property type="term" value="C:ribonucleoprotein complex"/>
    <property type="evidence" value="ECO:0007669"/>
    <property type="project" value="UniProtKB-KW"/>
</dbReference>
<dbReference type="GO" id="GO:0005840">
    <property type="term" value="C:ribosome"/>
    <property type="evidence" value="ECO:0007669"/>
    <property type="project" value="UniProtKB-KW"/>
</dbReference>
<dbReference type="GO" id="GO:0019843">
    <property type="term" value="F:rRNA binding"/>
    <property type="evidence" value="ECO:0007669"/>
    <property type="project" value="UniProtKB-KW"/>
</dbReference>
<organism>
    <name type="scientific">Anabaena variabilis</name>
    <dbReference type="NCBI Taxonomy" id="264691"/>
    <lineage>
        <taxon>Bacteria</taxon>
        <taxon>Bacillati</taxon>
        <taxon>Cyanobacteriota</taxon>
        <taxon>Cyanophyceae</taxon>
        <taxon>Nostocales</taxon>
        <taxon>Nostocaceae</taxon>
        <taxon>Trichormus</taxon>
    </lineage>
</organism>
<comment type="function">
    <text evidence="1">This is one of the proteins that binds to the 5S RNA in the ribosome where it forms part of the central protuberance.</text>
</comment>
<comment type="subunit">
    <text evidence="1">Part of the 50S ribosomal subunit; part of the 5S rRNA/L5/L18/L25 subcomplex. Contacts the 5S rRNA. Binds to the 5S rRNA independently of L5 and L18 (By similarity).</text>
</comment>
<comment type="similarity">
    <text evidence="2">Belongs to the bacterial ribosomal protein bL25 family.</text>
</comment>